<sequence length="423" mass="47381">MNNQLVPQNAAAAAAAAAAAAAAAAANSLKSRKPYTISKQRENWTDEEHQKFLEALTLFDRDWKKIESFVGSKTVIQIRSHAQKYFIKVQKNNTGERIPPPRPKRKSIQPYPQKQKHDGMGAFIPDSLSGNHFISSSSFATWMTYRGLMPNISESQINPSDLQKQLEQLQQAQQYIQQAVTTAQSSQRNGGLPPNPSSNNGGTTLTPNFPKIYAFLSNLFESNGTSFTEALSDLSMIDRETMQILMHNLAINLANQQYRDNHQTLSEQYRMKRDEDEDLNAIMISPRNSTGNINVSGDFYDNNSNNNNNNNNNNNNNNNNNNNNNNNNNNNNNNNNNNNNNNNNNNNNNNNNNNGGDFGDQNHSNMVNLGNYYNNHPNQNTINALYSLNQPSTLSNNPLNMVGNLNPQKQPPFNLNLNMQSGF</sequence>
<evidence type="ECO:0000255" key="1">
    <source>
        <dbReference type="PROSITE-ProRule" id="PRU00625"/>
    </source>
</evidence>
<evidence type="ECO:0000256" key="2">
    <source>
        <dbReference type="SAM" id="MobiDB-lite"/>
    </source>
</evidence>
<dbReference type="EMBL" id="AAFI02000125">
    <property type="protein sequence ID" value="EAL63013.1"/>
    <property type="molecule type" value="Genomic_DNA"/>
</dbReference>
<dbReference type="RefSeq" id="XP_636518.1">
    <property type="nucleotide sequence ID" value="XM_631426.1"/>
</dbReference>
<dbReference type="SMR" id="Q54IF9"/>
<dbReference type="STRING" id="44689.Q54IF9"/>
<dbReference type="PaxDb" id="44689-DDB0220514"/>
<dbReference type="EnsemblProtists" id="EAL63013">
    <property type="protein sequence ID" value="EAL63013"/>
    <property type="gene ID" value="DDB_G0288783"/>
</dbReference>
<dbReference type="GeneID" id="8626803"/>
<dbReference type="KEGG" id="ddi:DDB_G0288783"/>
<dbReference type="dictyBase" id="DDB_G0288783">
    <property type="gene designation" value="mybG"/>
</dbReference>
<dbReference type="VEuPathDB" id="AmoebaDB:DDB_G0288783"/>
<dbReference type="eggNOG" id="KOG0724">
    <property type="taxonomic scope" value="Eukaryota"/>
</dbReference>
<dbReference type="HOGENOM" id="CLU_649615_0_0_1"/>
<dbReference type="InParanoid" id="Q54IF9"/>
<dbReference type="OMA" id="QRENWTD"/>
<dbReference type="PhylomeDB" id="Q54IF9"/>
<dbReference type="PRO" id="PR:Q54IF9"/>
<dbReference type="Proteomes" id="UP000002195">
    <property type="component" value="Chromosome 5"/>
</dbReference>
<dbReference type="GO" id="GO:0005737">
    <property type="term" value="C:cytoplasm"/>
    <property type="evidence" value="ECO:0000314"/>
    <property type="project" value="dictyBase"/>
</dbReference>
<dbReference type="GO" id="GO:0005634">
    <property type="term" value="C:nucleus"/>
    <property type="evidence" value="ECO:0000314"/>
    <property type="project" value="dictyBase"/>
</dbReference>
<dbReference type="GO" id="GO:0003677">
    <property type="term" value="F:DNA binding"/>
    <property type="evidence" value="ECO:0000250"/>
    <property type="project" value="dictyBase"/>
</dbReference>
<dbReference type="GO" id="GO:0010468">
    <property type="term" value="P:regulation of gene expression"/>
    <property type="evidence" value="ECO:0000315"/>
    <property type="project" value="dictyBase"/>
</dbReference>
<dbReference type="GO" id="GO:1905301">
    <property type="term" value="P:regulation of macropinocytosis"/>
    <property type="evidence" value="ECO:0000315"/>
    <property type="project" value="dictyBase"/>
</dbReference>
<dbReference type="CDD" id="cd00167">
    <property type="entry name" value="SANT"/>
    <property type="match status" value="1"/>
</dbReference>
<dbReference type="FunFam" id="1.10.10.60:FF:000023">
    <property type="entry name" value="protein REVEILLE 6 isoform X1"/>
    <property type="match status" value="1"/>
</dbReference>
<dbReference type="Gene3D" id="1.10.10.60">
    <property type="entry name" value="Homeodomain-like"/>
    <property type="match status" value="1"/>
</dbReference>
<dbReference type="InterPro" id="IPR009057">
    <property type="entry name" value="Homeodomain-like_sf"/>
</dbReference>
<dbReference type="InterPro" id="IPR017930">
    <property type="entry name" value="Myb_dom"/>
</dbReference>
<dbReference type="InterPro" id="IPR006447">
    <property type="entry name" value="Myb_dom_plants"/>
</dbReference>
<dbReference type="InterPro" id="IPR001005">
    <property type="entry name" value="SANT/Myb"/>
</dbReference>
<dbReference type="InterPro" id="IPR017884">
    <property type="entry name" value="SANT_dom"/>
</dbReference>
<dbReference type="NCBIfam" id="TIGR01557">
    <property type="entry name" value="myb_SHAQKYF"/>
    <property type="match status" value="1"/>
</dbReference>
<dbReference type="PANTHER" id="PTHR12802:SF155">
    <property type="entry name" value="DEUBIQUITINASE MYSM1"/>
    <property type="match status" value="1"/>
</dbReference>
<dbReference type="PANTHER" id="PTHR12802">
    <property type="entry name" value="SWI/SNF COMPLEX-RELATED"/>
    <property type="match status" value="1"/>
</dbReference>
<dbReference type="Pfam" id="PF00249">
    <property type="entry name" value="Myb_DNA-binding"/>
    <property type="match status" value="1"/>
</dbReference>
<dbReference type="Pfam" id="PF24904">
    <property type="entry name" value="RVE6"/>
    <property type="match status" value="1"/>
</dbReference>
<dbReference type="SMART" id="SM00717">
    <property type="entry name" value="SANT"/>
    <property type="match status" value="1"/>
</dbReference>
<dbReference type="SUPFAM" id="SSF46689">
    <property type="entry name" value="Homeodomain-like"/>
    <property type="match status" value="1"/>
</dbReference>
<dbReference type="PROSITE" id="PS51294">
    <property type="entry name" value="HTH_MYB"/>
    <property type="match status" value="1"/>
</dbReference>
<comment type="subcellular location">
    <subcellularLocation>
        <location evidence="1">Nucleus</location>
    </subcellularLocation>
</comment>
<proteinExistence type="inferred from homology"/>
<name>MYBG_DICDI</name>
<gene>
    <name type="primary">mybG</name>
    <name type="ORF">DDB_G0288783</name>
</gene>
<protein>
    <recommendedName>
        <fullName>Myb-like protein G</fullName>
    </recommendedName>
</protein>
<feature type="chain" id="PRO_0000329382" description="Myb-like protein G">
    <location>
        <begin position="1"/>
        <end position="423"/>
    </location>
</feature>
<feature type="domain" description="HTH myb-type" evidence="1">
    <location>
        <begin position="36"/>
        <end position="90"/>
    </location>
</feature>
<feature type="DNA-binding region" description="H-T-H motif" evidence="1">
    <location>
        <begin position="63"/>
        <end position="86"/>
    </location>
</feature>
<feature type="region of interest" description="Disordered" evidence="2">
    <location>
        <begin position="93"/>
        <end position="116"/>
    </location>
</feature>
<feature type="region of interest" description="Disordered" evidence="2">
    <location>
        <begin position="177"/>
        <end position="205"/>
    </location>
</feature>
<feature type="region of interest" description="Disordered" evidence="2">
    <location>
        <begin position="284"/>
        <end position="372"/>
    </location>
</feature>
<feature type="compositionally biased region" description="Low complexity" evidence="2">
    <location>
        <begin position="177"/>
        <end position="202"/>
    </location>
</feature>
<feature type="compositionally biased region" description="Polar residues" evidence="2">
    <location>
        <begin position="286"/>
        <end position="295"/>
    </location>
</feature>
<feature type="compositionally biased region" description="Low complexity" evidence="2">
    <location>
        <begin position="302"/>
        <end position="354"/>
    </location>
</feature>
<feature type="compositionally biased region" description="Polar residues" evidence="2">
    <location>
        <begin position="361"/>
        <end position="372"/>
    </location>
</feature>
<reference key="1">
    <citation type="journal article" date="2005" name="Nature">
        <title>The genome of the social amoeba Dictyostelium discoideum.</title>
        <authorList>
            <person name="Eichinger L."/>
            <person name="Pachebat J.A."/>
            <person name="Gloeckner G."/>
            <person name="Rajandream M.A."/>
            <person name="Sucgang R."/>
            <person name="Berriman M."/>
            <person name="Song J."/>
            <person name="Olsen R."/>
            <person name="Szafranski K."/>
            <person name="Xu Q."/>
            <person name="Tunggal B."/>
            <person name="Kummerfeld S."/>
            <person name="Madera M."/>
            <person name="Konfortov B.A."/>
            <person name="Rivero F."/>
            <person name="Bankier A.T."/>
            <person name="Lehmann R."/>
            <person name="Hamlin N."/>
            <person name="Davies R."/>
            <person name="Gaudet P."/>
            <person name="Fey P."/>
            <person name="Pilcher K."/>
            <person name="Chen G."/>
            <person name="Saunders D."/>
            <person name="Sodergren E.J."/>
            <person name="Davis P."/>
            <person name="Kerhornou A."/>
            <person name="Nie X."/>
            <person name="Hall N."/>
            <person name="Anjard C."/>
            <person name="Hemphill L."/>
            <person name="Bason N."/>
            <person name="Farbrother P."/>
            <person name="Desany B."/>
            <person name="Just E."/>
            <person name="Morio T."/>
            <person name="Rost R."/>
            <person name="Churcher C.M."/>
            <person name="Cooper J."/>
            <person name="Haydock S."/>
            <person name="van Driessche N."/>
            <person name="Cronin A."/>
            <person name="Goodhead I."/>
            <person name="Muzny D.M."/>
            <person name="Mourier T."/>
            <person name="Pain A."/>
            <person name="Lu M."/>
            <person name="Harper D."/>
            <person name="Lindsay R."/>
            <person name="Hauser H."/>
            <person name="James K.D."/>
            <person name="Quiles M."/>
            <person name="Madan Babu M."/>
            <person name="Saito T."/>
            <person name="Buchrieser C."/>
            <person name="Wardroper A."/>
            <person name="Felder M."/>
            <person name="Thangavelu M."/>
            <person name="Johnson D."/>
            <person name="Knights A."/>
            <person name="Loulseged H."/>
            <person name="Mungall K.L."/>
            <person name="Oliver K."/>
            <person name="Price C."/>
            <person name="Quail M.A."/>
            <person name="Urushihara H."/>
            <person name="Hernandez J."/>
            <person name="Rabbinowitsch E."/>
            <person name="Steffen D."/>
            <person name="Sanders M."/>
            <person name="Ma J."/>
            <person name="Kohara Y."/>
            <person name="Sharp S."/>
            <person name="Simmonds M.N."/>
            <person name="Spiegler S."/>
            <person name="Tivey A."/>
            <person name="Sugano S."/>
            <person name="White B."/>
            <person name="Walker D."/>
            <person name="Woodward J.R."/>
            <person name="Winckler T."/>
            <person name="Tanaka Y."/>
            <person name="Shaulsky G."/>
            <person name="Schleicher M."/>
            <person name="Weinstock G.M."/>
            <person name="Rosenthal A."/>
            <person name="Cox E.C."/>
            <person name="Chisholm R.L."/>
            <person name="Gibbs R.A."/>
            <person name="Loomis W.F."/>
            <person name="Platzer M."/>
            <person name="Kay R.R."/>
            <person name="Williams J.G."/>
            <person name="Dear P.H."/>
            <person name="Noegel A.A."/>
            <person name="Barrell B.G."/>
            <person name="Kuspa A."/>
        </authorList>
    </citation>
    <scope>NUCLEOTIDE SEQUENCE [LARGE SCALE GENOMIC DNA]</scope>
    <source>
        <strain>AX4</strain>
    </source>
</reference>
<keyword id="KW-0238">DNA-binding</keyword>
<keyword id="KW-0539">Nucleus</keyword>
<keyword id="KW-1185">Reference proteome</keyword>
<keyword id="KW-0804">Transcription</keyword>
<keyword id="KW-0805">Transcription regulation</keyword>
<accession>Q54IF9</accession>
<organism>
    <name type="scientific">Dictyostelium discoideum</name>
    <name type="common">Social amoeba</name>
    <dbReference type="NCBI Taxonomy" id="44689"/>
    <lineage>
        <taxon>Eukaryota</taxon>
        <taxon>Amoebozoa</taxon>
        <taxon>Evosea</taxon>
        <taxon>Eumycetozoa</taxon>
        <taxon>Dictyostelia</taxon>
        <taxon>Dictyosteliales</taxon>
        <taxon>Dictyosteliaceae</taxon>
        <taxon>Dictyostelium</taxon>
    </lineage>
</organism>